<protein>
    <recommendedName>
        <fullName evidence="1">Sialic acid transporter NanT</fullName>
    </recommendedName>
    <alternativeName>
        <fullName evidence="1">Sialic acid permease</fullName>
    </alternativeName>
    <alternativeName>
        <fullName evidence="1">Sialic acid/H(+) symporter</fullName>
    </alternativeName>
</protein>
<organism>
    <name type="scientific">Escherichia coli O157:H7</name>
    <dbReference type="NCBI Taxonomy" id="83334"/>
    <lineage>
        <taxon>Bacteria</taxon>
        <taxon>Pseudomonadati</taxon>
        <taxon>Pseudomonadota</taxon>
        <taxon>Gammaproteobacteria</taxon>
        <taxon>Enterobacterales</taxon>
        <taxon>Enterobacteriaceae</taxon>
        <taxon>Escherichia</taxon>
    </lineage>
</organism>
<accession>Q8X9G8</accession>
<proteinExistence type="inferred from homology"/>
<dbReference type="EMBL" id="AE005174">
    <property type="protein sequence ID" value="AAG58352.1"/>
    <property type="status" value="ALT_INIT"/>
    <property type="molecule type" value="Genomic_DNA"/>
</dbReference>
<dbReference type="EMBL" id="BA000007">
    <property type="protein sequence ID" value="BAB37520.2"/>
    <property type="molecule type" value="Genomic_DNA"/>
</dbReference>
<dbReference type="PIR" id="A91141">
    <property type="entry name" value="A91141"/>
</dbReference>
<dbReference type="PIR" id="D85986">
    <property type="entry name" value="D85986"/>
</dbReference>
<dbReference type="RefSeq" id="NP_312124.2">
    <property type="nucleotide sequence ID" value="NC_002695.1"/>
</dbReference>
<dbReference type="RefSeq" id="WP_000108469.1">
    <property type="nucleotide sequence ID" value="NZ_VOAI01000014.1"/>
</dbReference>
<dbReference type="SMR" id="Q8X9G8"/>
<dbReference type="STRING" id="155864.Z4582"/>
<dbReference type="GeneID" id="916054"/>
<dbReference type="KEGG" id="ece:Z4582"/>
<dbReference type="KEGG" id="ecs:ECs_4097"/>
<dbReference type="PATRIC" id="fig|386585.9.peg.4277"/>
<dbReference type="eggNOG" id="COG2814">
    <property type="taxonomic scope" value="Bacteria"/>
</dbReference>
<dbReference type="HOGENOM" id="CLU_001265_46_8_6"/>
<dbReference type="OMA" id="SDITWGI"/>
<dbReference type="Proteomes" id="UP000000558">
    <property type="component" value="Chromosome"/>
</dbReference>
<dbReference type="Proteomes" id="UP000002519">
    <property type="component" value="Chromosome"/>
</dbReference>
<dbReference type="GO" id="GO:0005886">
    <property type="term" value="C:plasma membrane"/>
    <property type="evidence" value="ECO:0007669"/>
    <property type="project" value="UniProtKB-SubCell"/>
</dbReference>
<dbReference type="GO" id="GO:0046943">
    <property type="term" value="F:carboxylic acid transmembrane transporter activity"/>
    <property type="evidence" value="ECO:0007669"/>
    <property type="project" value="TreeGrafter"/>
</dbReference>
<dbReference type="GO" id="GO:0015538">
    <property type="term" value="F:sialic acid:proton symporter activity"/>
    <property type="evidence" value="ECO:0007669"/>
    <property type="project" value="UniProtKB-UniRule"/>
</dbReference>
<dbReference type="CDD" id="cd17316">
    <property type="entry name" value="MFS_SV2_like"/>
    <property type="match status" value="1"/>
</dbReference>
<dbReference type="FunFam" id="1.20.1250.20:FF:000027">
    <property type="entry name" value="Sialic acid transporter NanT"/>
    <property type="match status" value="1"/>
</dbReference>
<dbReference type="FunFam" id="1.20.1250.20:FF:000038">
    <property type="entry name" value="Sialic acid transporter NanT"/>
    <property type="match status" value="1"/>
</dbReference>
<dbReference type="Gene3D" id="1.20.1250.20">
    <property type="entry name" value="MFS general substrate transporter like domains"/>
    <property type="match status" value="2"/>
</dbReference>
<dbReference type="HAMAP" id="MF_01238">
    <property type="entry name" value="MFS_NanT"/>
    <property type="match status" value="1"/>
</dbReference>
<dbReference type="InterPro" id="IPR011701">
    <property type="entry name" value="MFS"/>
</dbReference>
<dbReference type="InterPro" id="IPR020846">
    <property type="entry name" value="MFS_dom"/>
</dbReference>
<dbReference type="InterPro" id="IPR036259">
    <property type="entry name" value="MFS_trans_sf"/>
</dbReference>
<dbReference type="InterPro" id="IPR004742">
    <property type="entry name" value="SA_transporter"/>
</dbReference>
<dbReference type="NCBIfam" id="TIGR00891">
    <property type="entry name" value="2A0112"/>
    <property type="match status" value="1"/>
</dbReference>
<dbReference type="NCBIfam" id="NF003024">
    <property type="entry name" value="PRK03893.1"/>
    <property type="match status" value="1"/>
</dbReference>
<dbReference type="PANTHER" id="PTHR23508">
    <property type="entry name" value="CARBOXYLIC ACID TRANSPORTER PROTEIN HOMOLOG"/>
    <property type="match status" value="1"/>
</dbReference>
<dbReference type="PANTHER" id="PTHR23508:SF3">
    <property type="entry name" value="SIALIC ACID TRANSPORTER NANT"/>
    <property type="match status" value="1"/>
</dbReference>
<dbReference type="Pfam" id="PF07690">
    <property type="entry name" value="MFS_1"/>
    <property type="match status" value="1"/>
</dbReference>
<dbReference type="SUPFAM" id="SSF103473">
    <property type="entry name" value="MFS general substrate transporter"/>
    <property type="match status" value="1"/>
</dbReference>
<dbReference type="PROSITE" id="PS50850">
    <property type="entry name" value="MFS"/>
    <property type="match status" value="1"/>
</dbReference>
<evidence type="ECO:0000255" key="1">
    <source>
        <dbReference type="HAMAP-Rule" id="MF_01238"/>
    </source>
</evidence>
<evidence type="ECO:0000305" key="2"/>
<feature type="chain" id="PRO_0000050312" description="Sialic acid transporter NanT">
    <location>
        <begin position="1"/>
        <end position="496"/>
    </location>
</feature>
<feature type="transmembrane region" description="Helical" evidence="1">
    <location>
        <begin position="22"/>
        <end position="42"/>
    </location>
</feature>
<feature type="transmembrane region" description="Helical" evidence="1">
    <location>
        <begin position="58"/>
        <end position="78"/>
    </location>
</feature>
<feature type="transmembrane region" description="Helical" evidence="1">
    <location>
        <begin position="92"/>
        <end position="112"/>
    </location>
</feature>
<feature type="transmembrane region" description="Helical" evidence="1">
    <location>
        <begin position="116"/>
        <end position="136"/>
    </location>
</feature>
<feature type="transmembrane region" description="Helical" evidence="1">
    <location>
        <begin position="148"/>
        <end position="168"/>
    </location>
</feature>
<feature type="transmembrane region" description="Helical" evidence="1">
    <location>
        <begin position="170"/>
        <end position="190"/>
    </location>
</feature>
<feature type="transmembrane region" description="Helical" evidence="1">
    <location>
        <begin position="224"/>
        <end position="244"/>
    </location>
</feature>
<feature type="transmembrane region" description="Helical" evidence="1">
    <location>
        <begin position="247"/>
        <end position="267"/>
    </location>
</feature>
<feature type="transmembrane region" description="Helical" evidence="1">
    <location>
        <begin position="278"/>
        <end position="298"/>
    </location>
</feature>
<feature type="transmembrane region" description="Helical" evidence="1">
    <location>
        <begin position="313"/>
        <end position="333"/>
    </location>
</feature>
<feature type="transmembrane region" description="Helical" evidence="1">
    <location>
        <begin position="353"/>
        <end position="375"/>
    </location>
</feature>
<feature type="transmembrane region" description="Helical" evidence="1">
    <location>
        <begin position="406"/>
        <end position="426"/>
    </location>
</feature>
<feature type="transmembrane region" description="Helical" evidence="1">
    <location>
        <begin position="431"/>
        <end position="451"/>
    </location>
</feature>
<keyword id="KW-0997">Cell inner membrane</keyword>
<keyword id="KW-1003">Cell membrane</keyword>
<keyword id="KW-0472">Membrane</keyword>
<keyword id="KW-1185">Reference proteome</keyword>
<keyword id="KW-0762">Sugar transport</keyword>
<keyword id="KW-0812">Transmembrane</keyword>
<keyword id="KW-1133">Transmembrane helix</keyword>
<keyword id="KW-0813">Transport</keyword>
<reference key="1">
    <citation type="journal article" date="2001" name="Nature">
        <title>Genome sequence of enterohaemorrhagic Escherichia coli O157:H7.</title>
        <authorList>
            <person name="Perna N.T."/>
            <person name="Plunkett G. III"/>
            <person name="Burland V."/>
            <person name="Mau B."/>
            <person name="Glasner J.D."/>
            <person name="Rose D.J."/>
            <person name="Mayhew G.F."/>
            <person name="Evans P.S."/>
            <person name="Gregor J."/>
            <person name="Kirkpatrick H.A."/>
            <person name="Posfai G."/>
            <person name="Hackett J."/>
            <person name="Klink S."/>
            <person name="Boutin A."/>
            <person name="Shao Y."/>
            <person name="Miller L."/>
            <person name="Grotbeck E.J."/>
            <person name="Davis N.W."/>
            <person name="Lim A."/>
            <person name="Dimalanta E.T."/>
            <person name="Potamousis K."/>
            <person name="Apodaca J."/>
            <person name="Anantharaman T.S."/>
            <person name="Lin J."/>
            <person name="Yen G."/>
            <person name="Schwartz D.C."/>
            <person name="Welch R.A."/>
            <person name="Blattner F.R."/>
        </authorList>
    </citation>
    <scope>NUCLEOTIDE SEQUENCE [LARGE SCALE GENOMIC DNA]</scope>
    <source>
        <strain>O157:H7 / EDL933 / ATCC 700927 / EHEC</strain>
    </source>
</reference>
<reference key="2">
    <citation type="journal article" date="2001" name="DNA Res.">
        <title>Complete genome sequence of enterohemorrhagic Escherichia coli O157:H7 and genomic comparison with a laboratory strain K-12.</title>
        <authorList>
            <person name="Hayashi T."/>
            <person name="Makino K."/>
            <person name="Ohnishi M."/>
            <person name="Kurokawa K."/>
            <person name="Ishii K."/>
            <person name="Yokoyama K."/>
            <person name="Han C.-G."/>
            <person name="Ohtsubo E."/>
            <person name="Nakayama K."/>
            <person name="Murata T."/>
            <person name="Tanaka M."/>
            <person name="Tobe T."/>
            <person name="Iida T."/>
            <person name="Takami H."/>
            <person name="Honda T."/>
            <person name="Sasakawa C."/>
            <person name="Ogasawara N."/>
            <person name="Yasunaga T."/>
            <person name="Kuhara S."/>
            <person name="Shiba T."/>
            <person name="Hattori M."/>
            <person name="Shinagawa H."/>
        </authorList>
    </citation>
    <scope>NUCLEOTIDE SEQUENCE [LARGE SCALE GENOMIC DNA]</scope>
    <source>
        <strain>O157:H7 / Sakai / RIMD 0509952 / EHEC</strain>
    </source>
</reference>
<gene>
    <name evidence="1" type="primary">nanT</name>
    <name type="ordered locus">Z4582</name>
    <name type="ordered locus">ECs4097</name>
</gene>
<name>NANT_ECO57</name>
<comment type="function">
    <text evidence="1">Catalyzes the proton-dependent transport of sialic acid.</text>
</comment>
<comment type="catalytic activity">
    <reaction evidence="1">
        <text>N-acetylneuraminate(in) + H(+)(in) = N-acetylneuraminate(out) + H(+)(out)</text>
        <dbReference type="Rhea" id="RHEA:28987"/>
        <dbReference type="ChEBI" id="CHEBI:15378"/>
        <dbReference type="ChEBI" id="CHEBI:35418"/>
    </reaction>
</comment>
<comment type="subcellular location">
    <subcellularLocation>
        <location evidence="1">Cell inner membrane</location>
        <topology evidence="1">Multi-pass membrane protein</topology>
    </subcellularLocation>
</comment>
<comment type="similarity">
    <text evidence="1">Belongs to the major facilitator superfamily. Sialate:H(+) symporter (SHS) (TC 2.A.1.12) family.</text>
</comment>
<comment type="sequence caution" evidence="2">
    <conflict type="erroneous initiation">
        <sequence resource="EMBL-CDS" id="AAG58352"/>
    </conflict>
    <text>Extended N-terminus.</text>
</comment>
<sequence length="496" mass="53611">MSTTTQNIPWYRHLNRAQWRAFSAAWLGYLLDGFDFVLIALVLTEVQGEFGLTTVQAASLISAAFISRWFGGLMLGAMGDRYGRRLAMVTSIVLFSAGTLACGFAPGYITMFIARLVIGMGMAGEYGSSATYVIESWPKHLRNKASGFLISGFSVGAVVAAQVYSLVVPVWGWRALFFIGILPIIFALWLRKNIPEAEDWKEKHAGKAPVRTMVDILYRGEHRIANIVMTLAAATALWFCFAGNLQNAAIVAVLGLLCTAIFISFMVQSTGKRWPTGVMLMVVVLFAFLYSWPIQALLPTYLKTDLAYNPHTVANVLFFSGFGAAVGCCVGGFLGDWLGTRKAYVCSLLASQLLIIPVFAIGGANVWVLGLLLFFQQMLGQGIAGILPKLIGGYFDTDQRAAGLGFTYNVGALGGALAPIIGALIAQRLDLGTALASLSFSLTFVVILLIGLDMPSRVQRWLRPEALRTHDAIDGKPFSGAVPFGSAKNDLVKTKS</sequence>